<feature type="chain" id="PRO_0000301386" description="Phosphoglucosamine mutase">
    <location>
        <begin position="1"/>
        <end position="450"/>
    </location>
</feature>
<feature type="active site" description="Phosphoserine intermediate" evidence="1">
    <location>
        <position position="101"/>
    </location>
</feature>
<feature type="binding site" description="via phosphate group" evidence="1">
    <location>
        <position position="101"/>
    </location>
    <ligand>
        <name>Mg(2+)</name>
        <dbReference type="ChEBI" id="CHEBI:18420"/>
    </ligand>
</feature>
<feature type="binding site" evidence="1">
    <location>
        <position position="240"/>
    </location>
    <ligand>
        <name>Mg(2+)</name>
        <dbReference type="ChEBI" id="CHEBI:18420"/>
    </ligand>
</feature>
<feature type="binding site" evidence="1">
    <location>
        <position position="242"/>
    </location>
    <ligand>
        <name>Mg(2+)</name>
        <dbReference type="ChEBI" id="CHEBI:18420"/>
    </ligand>
</feature>
<feature type="binding site" evidence="1">
    <location>
        <position position="244"/>
    </location>
    <ligand>
        <name>Mg(2+)</name>
        <dbReference type="ChEBI" id="CHEBI:18420"/>
    </ligand>
</feature>
<feature type="modified residue" description="Phosphoserine" evidence="1">
    <location>
        <position position="101"/>
    </location>
</feature>
<evidence type="ECO:0000255" key="1">
    <source>
        <dbReference type="HAMAP-Rule" id="MF_01554"/>
    </source>
</evidence>
<name>GLMM_STRP2</name>
<proteinExistence type="inferred from homology"/>
<organism>
    <name type="scientific">Streptococcus pneumoniae serotype 2 (strain D39 / NCTC 7466)</name>
    <dbReference type="NCBI Taxonomy" id="373153"/>
    <lineage>
        <taxon>Bacteria</taxon>
        <taxon>Bacillati</taxon>
        <taxon>Bacillota</taxon>
        <taxon>Bacilli</taxon>
        <taxon>Lactobacillales</taxon>
        <taxon>Streptococcaceae</taxon>
        <taxon>Streptococcus</taxon>
    </lineage>
</organism>
<accession>Q04JI8</accession>
<sequence length="450" mass="48123">MGKYFGTDGVRGEANLELTPELAFKLGRFGGYVLSQHETEAPKVFVGRDTRISGEMLESALVAGLLSVGIHVYKLGVLATPAVAYLVETEGASAGVMISASHNPALDNGIKFFGGDGFKLDDEKEAEIEALLDAEEDTLPRPSAEGLGILVDYPEGLRKYEGYLVSTGTPLDGMKVALDTANGAASTSARQIFADLGAQLTVIGETPDGLNINLNVGSTHPEALQEVVKESGSAIGLAFDGDSDRLIAVDENGDIVDGDKIMYIIGKYLSKKGQLAQNTIVTTVMSNLGFHKALNREGINKAVTAVGDRYVVEEMRKSGYNLGGEQSGHVILMDYNTTGDGQLSAVQLTKIMKETGKSLSELAAEVTIYPQKLVNIRVENVMKEKAMEVPAIKAIIEKMEEEMAGNGRILVRPSGTEPLLRVMAEAPTTEEVDYYVDTITDVVRAEIGID</sequence>
<comment type="function">
    <text evidence="1">Catalyzes the conversion of glucosamine-6-phosphate to glucosamine-1-phosphate.</text>
</comment>
<comment type="catalytic activity">
    <reaction evidence="1">
        <text>alpha-D-glucosamine 1-phosphate = D-glucosamine 6-phosphate</text>
        <dbReference type="Rhea" id="RHEA:23424"/>
        <dbReference type="ChEBI" id="CHEBI:58516"/>
        <dbReference type="ChEBI" id="CHEBI:58725"/>
        <dbReference type="EC" id="5.4.2.10"/>
    </reaction>
</comment>
<comment type="cofactor">
    <cofactor evidence="1">
        <name>Mg(2+)</name>
        <dbReference type="ChEBI" id="CHEBI:18420"/>
    </cofactor>
    <text evidence="1">Binds 1 Mg(2+) ion per subunit.</text>
</comment>
<comment type="PTM">
    <text evidence="1">Activated by phosphorylation.</text>
</comment>
<comment type="similarity">
    <text evidence="1">Belongs to the phosphohexose mutase family.</text>
</comment>
<keyword id="KW-0413">Isomerase</keyword>
<keyword id="KW-0460">Magnesium</keyword>
<keyword id="KW-0479">Metal-binding</keyword>
<keyword id="KW-0597">Phosphoprotein</keyword>
<keyword id="KW-1185">Reference proteome</keyword>
<gene>
    <name evidence="1" type="primary">glmM</name>
    <name type="ordered locus">SPD_1390</name>
</gene>
<reference key="1">
    <citation type="journal article" date="2007" name="J. Bacteriol.">
        <title>Genome sequence of Avery's virulent serotype 2 strain D39 of Streptococcus pneumoniae and comparison with that of unencapsulated laboratory strain R6.</title>
        <authorList>
            <person name="Lanie J.A."/>
            <person name="Ng W.-L."/>
            <person name="Kazmierczak K.M."/>
            <person name="Andrzejewski T.M."/>
            <person name="Davidsen T.M."/>
            <person name="Wayne K.J."/>
            <person name="Tettelin H."/>
            <person name="Glass J.I."/>
            <person name="Winkler M.E."/>
        </authorList>
    </citation>
    <scope>NUCLEOTIDE SEQUENCE [LARGE SCALE GENOMIC DNA]</scope>
    <source>
        <strain>D39 / NCTC 7466</strain>
    </source>
</reference>
<protein>
    <recommendedName>
        <fullName evidence="1">Phosphoglucosamine mutase</fullName>
        <ecNumber evidence="1">5.4.2.10</ecNumber>
    </recommendedName>
</protein>
<dbReference type="EC" id="5.4.2.10" evidence="1"/>
<dbReference type="EMBL" id="CP000410">
    <property type="protein sequence ID" value="ABJ54718.1"/>
    <property type="molecule type" value="Genomic_DNA"/>
</dbReference>
<dbReference type="RefSeq" id="WP_000521416.1">
    <property type="nucleotide sequence ID" value="NZ_JAMLJR010000008.1"/>
</dbReference>
<dbReference type="SMR" id="Q04JI8"/>
<dbReference type="PaxDb" id="373153-SPD_1390"/>
<dbReference type="KEGG" id="spd:SPD_1390"/>
<dbReference type="eggNOG" id="COG1109">
    <property type="taxonomic scope" value="Bacteria"/>
</dbReference>
<dbReference type="HOGENOM" id="CLU_016950_7_0_9"/>
<dbReference type="BioCyc" id="SPNE373153:G1G6V-1495-MONOMER"/>
<dbReference type="Proteomes" id="UP000001452">
    <property type="component" value="Chromosome"/>
</dbReference>
<dbReference type="GO" id="GO:0005829">
    <property type="term" value="C:cytosol"/>
    <property type="evidence" value="ECO:0007669"/>
    <property type="project" value="TreeGrafter"/>
</dbReference>
<dbReference type="GO" id="GO:0000287">
    <property type="term" value="F:magnesium ion binding"/>
    <property type="evidence" value="ECO:0007669"/>
    <property type="project" value="UniProtKB-UniRule"/>
</dbReference>
<dbReference type="GO" id="GO:0008966">
    <property type="term" value="F:phosphoglucosamine mutase activity"/>
    <property type="evidence" value="ECO:0007669"/>
    <property type="project" value="UniProtKB-UniRule"/>
</dbReference>
<dbReference type="GO" id="GO:0004615">
    <property type="term" value="F:phosphomannomutase activity"/>
    <property type="evidence" value="ECO:0007669"/>
    <property type="project" value="TreeGrafter"/>
</dbReference>
<dbReference type="GO" id="GO:0005975">
    <property type="term" value="P:carbohydrate metabolic process"/>
    <property type="evidence" value="ECO:0007669"/>
    <property type="project" value="InterPro"/>
</dbReference>
<dbReference type="GO" id="GO:0009252">
    <property type="term" value="P:peptidoglycan biosynthetic process"/>
    <property type="evidence" value="ECO:0007669"/>
    <property type="project" value="TreeGrafter"/>
</dbReference>
<dbReference type="GO" id="GO:0006048">
    <property type="term" value="P:UDP-N-acetylglucosamine biosynthetic process"/>
    <property type="evidence" value="ECO:0007669"/>
    <property type="project" value="TreeGrafter"/>
</dbReference>
<dbReference type="CDD" id="cd05802">
    <property type="entry name" value="GlmM"/>
    <property type="match status" value="1"/>
</dbReference>
<dbReference type="FunFam" id="3.30.310.50:FF:000001">
    <property type="entry name" value="Phosphoglucosamine mutase"/>
    <property type="match status" value="1"/>
</dbReference>
<dbReference type="FunFam" id="3.40.120.10:FF:000001">
    <property type="entry name" value="Phosphoglucosamine mutase"/>
    <property type="match status" value="1"/>
</dbReference>
<dbReference type="FunFam" id="3.40.120.10:FF:000002">
    <property type="entry name" value="Phosphoglucosamine mutase"/>
    <property type="match status" value="1"/>
</dbReference>
<dbReference type="Gene3D" id="3.40.120.10">
    <property type="entry name" value="Alpha-D-Glucose-1,6-Bisphosphate, subunit A, domain 3"/>
    <property type="match status" value="3"/>
</dbReference>
<dbReference type="Gene3D" id="3.30.310.50">
    <property type="entry name" value="Alpha-D-phosphohexomutase, C-terminal domain"/>
    <property type="match status" value="1"/>
</dbReference>
<dbReference type="HAMAP" id="MF_01554_B">
    <property type="entry name" value="GlmM_B"/>
    <property type="match status" value="1"/>
</dbReference>
<dbReference type="InterPro" id="IPR005844">
    <property type="entry name" value="A-D-PHexomutase_a/b/a-I"/>
</dbReference>
<dbReference type="InterPro" id="IPR016055">
    <property type="entry name" value="A-D-PHexomutase_a/b/a-I/II/III"/>
</dbReference>
<dbReference type="InterPro" id="IPR005845">
    <property type="entry name" value="A-D-PHexomutase_a/b/a-II"/>
</dbReference>
<dbReference type="InterPro" id="IPR005846">
    <property type="entry name" value="A-D-PHexomutase_a/b/a-III"/>
</dbReference>
<dbReference type="InterPro" id="IPR005843">
    <property type="entry name" value="A-D-PHexomutase_C"/>
</dbReference>
<dbReference type="InterPro" id="IPR036900">
    <property type="entry name" value="A-D-PHexomutase_C_sf"/>
</dbReference>
<dbReference type="InterPro" id="IPR016066">
    <property type="entry name" value="A-D-PHexomutase_CS"/>
</dbReference>
<dbReference type="InterPro" id="IPR005841">
    <property type="entry name" value="Alpha-D-phosphohexomutase_SF"/>
</dbReference>
<dbReference type="InterPro" id="IPR006352">
    <property type="entry name" value="GlmM_bact"/>
</dbReference>
<dbReference type="InterPro" id="IPR050060">
    <property type="entry name" value="Phosphoglucosamine_mutase"/>
</dbReference>
<dbReference type="NCBIfam" id="TIGR01455">
    <property type="entry name" value="glmM"/>
    <property type="match status" value="1"/>
</dbReference>
<dbReference type="PANTHER" id="PTHR42946:SF1">
    <property type="entry name" value="PHOSPHOGLUCOMUTASE (ALPHA-D-GLUCOSE-1,6-BISPHOSPHATE-DEPENDENT)"/>
    <property type="match status" value="1"/>
</dbReference>
<dbReference type="PANTHER" id="PTHR42946">
    <property type="entry name" value="PHOSPHOHEXOSE MUTASE"/>
    <property type="match status" value="1"/>
</dbReference>
<dbReference type="Pfam" id="PF02878">
    <property type="entry name" value="PGM_PMM_I"/>
    <property type="match status" value="1"/>
</dbReference>
<dbReference type="Pfam" id="PF02879">
    <property type="entry name" value="PGM_PMM_II"/>
    <property type="match status" value="1"/>
</dbReference>
<dbReference type="Pfam" id="PF02880">
    <property type="entry name" value="PGM_PMM_III"/>
    <property type="match status" value="1"/>
</dbReference>
<dbReference type="Pfam" id="PF00408">
    <property type="entry name" value="PGM_PMM_IV"/>
    <property type="match status" value="1"/>
</dbReference>
<dbReference type="PRINTS" id="PR00509">
    <property type="entry name" value="PGMPMM"/>
</dbReference>
<dbReference type="SUPFAM" id="SSF55957">
    <property type="entry name" value="Phosphoglucomutase, C-terminal domain"/>
    <property type="match status" value="1"/>
</dbReference>
<dbReference type="SUPFAM" id="SSF53738">
    <property type="entry name" value="Phosphoglucomutase, first 3 domains"/>
    <property type="match status" value="3"/>
</dbReference>
<dbReference type="PROSITE" id="PS00710">
    <property type="entry name" value="PGM_PMM"/>
    <property type="match status" value="1"/>
</dbReference>